<gene>
    <name evidence="1" type="primary">dltA</name>
    <name type="ordered locus">SAR0894</name>
</gene>
<evidence type="ECO:0000255" key="1">
    <source>
        <dbReference type="HAMAP-Rule" id="MF_00593"/>
    </source>
</evidence>
<organism>
    <name type="scientific">Staphylococcus aureus (strain MRSA252)</name>
    <dbReference type="NCBI Taxonomy" id="282458"/>
    <lineage>
        <taxon>Bacteria</taxon>
        <taxon>Bacillati</taxon>
        <taxon>Bacillota</taxon>
        <taxon>Bacilli</taxon>
        <taxon>Bacillales</taxon>
        <taxon>Staphylococcaceae</taxon>
        <taxon>Staphylococcus</taxon>
    </lineage>
</organism>
<reference key="1">
    <citation type="journal article" date="2004" name="Proc. Natl. Acad. Sci. U.S.A.">
        <title>Complete genomes of two clinical Staphylococcus aureus strains: evidence for the rapid evolution of virulence and drug resistance.</title>
        <authorList>
            <person name="Holden M.T.G."/>
            <person name="Feil E.J."/>
            <person name="Lindsay J.A."/>
            <person name="Peacock S.J."/>
            <person name="Day N.P.J."/>
            <person name="Enright M.C."/>
            <person name="Foster T.J."/>
            <person name="Moore C.E."/>
            <person name="Hurst L."/>
            <person name="Atkin R."/>
            <person name="Barron A."/>
            <person name="Bason N."/>
            <person name="Bentley S.D."/>
            <person name="Chillingworth C."/>
            <person name="Chillingworth T."/>
            <person name="Churcher C."/>
            <person name="Clark L."/>
            <person name="Corton C."/>
            <person name="Cronin A."/>
            <person name="Doggett J."/>
            <person name="Dowd L."/>
            <person name="Feltwell T."/>
            <person name="Hance Z."/>
            <person name="Harris B."/>
            <person name="Hauser H."/>
            <person name="Holroyd S."/>
            <person name="Jagels K."/>
            <person name="James K.D."/>
            <person name="Lennard N."/>
            <person name="Line A."/>
            <person name="Mayes R."/>
            <person name="Moule S."/>
            <person name="Mungall K."/>
            <person name="Ormond D."/>
            <person name="Quail M.A."/>
            <person name="Rabbinowitsch E."/>
            <person name="Rutherford K.M."/>
            <person name="Sanders M."/>
            <person name="Sharp S."/>
            <person name="Simmonds M."/>
            <person name="Stevens K."/>
            <person name="Whitehead S."/>
            <person name="Barrell B.G."/>
            <person name="Spratt B.G."/>
            <person name="Parkhill J."/>
        </authorList>
    </citation>
    <scope>NUCLEOTIDE SEQUENCE [LARGE SCALE GENOMIC DNA]</scope>
    <source>
        <strain>MRSA252</strain>
    </source>
</reference>
<keyword id="KW-0067">ATP-binding</keyword>
<keyword id="KW-0963">Cytoplasm</keyword>
<keyword id="KW-0436">Ligase</keyword>
<keyword id="KW-0547">Nucleotide-binding</keyword>
<protein>
    <recommendedName>
        <fullName evidence="1">D-alanine--D-alanyl carrier protein ligase</fullName>
        <shortName evidence="1">DCL</shortName>
        <ecNumber evidence="1">6.2.1.54</ecNumber>
    </recommendedName>
    <alternativeName>
        <fullName evidence="1">D-alanine--poly(phosphoribitol) ligase subunit 1</fullName>
    </alternativeName>
    <alternativeName>
        <fullName evidence="1">D-alanine-activating enzyme</fullName>
        <shortName evidence="1">DAE</shortName>
    </alternativeName>
</protein>
<comment type="function">
    <text evidence="1">Catalyzes the first step in the D-alanylation of lipoteichoic acid (LTA), the activation of D-alanine and its transfer onto the D-alanyl carrier protein (Dcp) DltC. In an ATP-dependent two-step reaction, forms a high energy D-alanyl-AMP intermediate, followed by transfer of the D-alanyl residue as a thiol ester to the phosphopantheinyl prosthetic group of the Dcp. D-alanylation of LTA plays an important role in modulating the properties of the cell wall in Gram-positive bacteria, influencing the net charge of the cell wall.</text>
</comment>
<comment type="catalytic activity">
    <reaction evidence="1">
        <text>holo-[D-alanyl-carrier protein] + D-alanine + ATP = D-alanyl-[D-alanyl-carrier protein] + AMP + diphosphate</text>
        <dbReference type="Rhea" id="RHEA:55132"/>
        <dbReference type="Rhea" id="RHEA-COMP:14102"/>
        <dbReference type="Rhea" id="RHEA-COMP:14103"/>
        <dbReference type="ChEBI" id="CHEBI:30616"/>
        <dbReference type="ChEBI" id="CHEBI:33019"/>
        <dbReference type="ChEBI" id="CHEBI:57416"/>
        <dbReference type="ChEBI" id="CHEBI:64479"/>
        <dbReference type="ChEBI" id="CHEBI:138620"/>
        <dbReference type="ChEBI" id="CHEBI:456215"/>
        <dbReference type="EC" id="6.2.1.54"/>
    </reaction>
</comment>
<comment type="pathway">
    <text evidence="1">Cell wall biogenesis; lipoteichoic acid biosynthesis.</text>
</comment>
<comment type="subcellular location">
    <subcellularLocation>
        <location evidence="1">Cytoplasm</location>
    </subcellularLocation>
</comment>
<comment type="similarity">
    <text evidence="1">Belongs to the ATP-dependent AMP-binding enzyme family. DltA subfamily.</text>
</comment>
<sequence>MTDIINKLQAFADANPQSIAVRHTTDELTYQQLMDESSKLAHRLQGSKKPMILFGHMSPYMIVGMIGAIKAGCGYVPVDTSIPEDRIKMIINKVQPEFVFNTTDESFESLAGEVFTIEDIKTSQDPVIFDSQIKDNDTVYTIFTSGSTGEPKGVQIEYASLVQFTEWMLELNKSGNEQQWLNQAPFSFDLSVMAIYPCLASGGTLNLVDKNMINKPKLLNEMLTATPINIWVSTPSFMEMCLLLPTLNEEQYGSLNEFFFCGEILPHRAAKALVSRFPSATIYNTYGPTEATVAVTSIQITQEILDQYPTLPVGVERPGARLSTTDEGELVIEGQSVSLGYLKNDQKTAEVFNFDDGIRTYHTGDKAKFENGQWFIQGRIDFQIKLNGYRMELEEIETQLRQSEFVKEAIVVPVYKNDKVIHLIGAIVPTTEVTDNAEMTKNIKNDLKSRLPEYMIPRKFEWMEQLPLTSNGKIDRKKIAEVING</sequence>
<accession>Q6GIF6</accession>
<proteinExistence type="inferred from homology"/>
<name>DLTA_STAAR</name>
<dbReference type="EC" id="6.2.1.54" evidence="1"/>
<dbReference type="EMBL" id="BX571856">
    <property type="protein sequence ID" value="CAG39900.1"/>
    <property type="molecule type" value="Genomic_DNA"/>
</dbReference>
<dbReference type="RefSeq" id="WP_000129645.1">
    <property type="nucleotide sequence ID" value="NC_002952.2"/>
</dbReference>
<dbReference type="SMR" id="Q6GIF6"/>
<dbReference type="KEGG" id="sar:SAR0894"/>
<dbReference type="HOGENOM" id="CLU_000022_2_12_9"/>
<dbReference type="UniPathway" id="UPA00556"/>
<dbReference type="Proteomes" id="UP000000596">
    <property type="component" value="Chromosome"/>
</dbReference>
<dbReference type="GO" id="GO:0005737">
    <property type="term" value="C:cytoplasm"/>
    <property type="evidence" value="ECO:0007669"/>
    <property type="project" value="UniProtKB-SubCell"/>
</dbReference>
<dbReference type="GO" id="GO:0005524">
    <property type="term" value="F:ATP binding"/>
    <property type="evidence" value="ECO:0007669"/>
    <property type="project" value="UniProtKB-KW"/>
</dbReference>
<dbReference type="GO" id="GO:0047473">
    <property type="term" value="F:D-alanine [D-alanyl carrier protein] ligase activity"/>
    <property type="evidence" value="ECO:0007669"/>
    <property type="project" value="UniProtKB-UniRule"/>
</dbReference>
<dbReference type="GO" id="GO:0070395">
    <property type="term" value="P:lipoteichoic acid biosynthetic process"/>
    <property type="evidence" value="ECO:0007669"/>
    <property type="project" value="UniProtKB-UniRule"/>
</dbReference>
<dbReference type="CDD" id="cd05945">
    <property type="entry name" value="DltA"/>
    <property type="match status" value="1"/>
</dbReference>
<dbReference type="FunFam" id="3.30.300.30:FF:000012">
    <property type="entry name" value="D-alanine--D-alanyl carrier protein ligase"/>
    <property type="match status" value="1"/>
</dbReference>
<dbReference type="Gene3D" id="3.30.300.30">
    <property type="match status" value="1"/>
</dbReference>
<dbReference type="Gene3D" id="3.40.50.12780">
    <property type="entry name" value="N-terminal domain of ligase-like"/>
    <property type="match status" value="1"/>
</dbReference>
<dbReference type="HAMAP" id="MF_00593">
    <property type="entry name" value="DltA"/>
    <property type="match status" value="1"/>
</dbReference>
<dbReference type="InterPro" id="IPR010071">
    <property type="entry name" value="AA_adenyl_dom"/>
</dbReference>
<dbReference type="InterPro" id="IPR025110">
    <property type="entry name" value="AMP-bd_C"/>
</dbReference>
<dbReference type="InterPro" id="IPR045851">
    <property type="entry name" value="AMP-bd_C_sf"/>
</dbReference>
<dbReference type="InterPro" id="IPR000873">
    <property type="entry name" value="AMP-dep_synth/lig_dom"/>
</dbReference>
<dbReference type="InterPro" id="IPR042099">
    <property type="entry name" value="ANL_N_sf"/>
</dbReference>
<dbReference type="InterPro" id="IPR010072">
    <property type="entry name" value="DltA"/>
</dbReference>
<dbReference type="InterPro" id="IPR044507">
    <property type="entry name" value="DltA-like"/>
</dbReference>
<dbReference type="NCBIfam" id="TIGR01733">
    <property type="entry name" value="AA-adenyl-dom"/>
    <property type="match status" value="1"/>
</dbReference>
<dbReference type="NCBIfam" id="TIGR01734">
    <property type="entry name" value="D-ala-DACP-lig"/>
    <property type="match status" value="1"/>
</dbReference>
<dbReference type="NCBIfam" id="NF003417">
    <property type="entry name" value="PRK04813.1"/>
    <property type="match status" value="1"/>
</dbReference>
<dbReference type="PANTHER" id="PTHR45398">
    <property type="match status" value="1"/>
</dbReference>
<dbReference type="PANTHER" id="PTHR45398:SF1">
    <property type="entry name" value="ENZYME, PUTATIVE (JCVI)-RELATED"/>
    <property type="match status" value="1"/>
</dbReference>
<dbReference type="Pfam" id="PF00501">
    <property type="entry name" value="AMP-binding"/>
    <property type="match status" value="1"/>
</dbReference>
<dbReference type="Pfam" id="PF13193">
    <property type="entry name" value="AMP-binding_C"/>
    <property type="match status" value="1"/>
</dbReference>
<dbReference type="SUPFAM" id="SSF56801">
    <property type="entry name" value="Acetyl-CoA synthetase-like"/>
    <property type="match status" value="1"/>
</dbReference>
<feature type="chain" id="PRO_0000213153" description="D-alanine--D-alanyl carrier protein ligase">
    <location>
        <begin position="1"/>
        <end position="485"/>
    </location>
</feature>
<feature type="binding site" evidence="1">
    <location>
        <begin position="144"/>
        <end position="145"/>
    </location>
    <ligand>
        <name>ATP</name>
        <dbReference type="ChEBI" id="CHEBI:30616"/>
    </ligand>
</feature>
<feature type="binding site" evidence="1">
    <location>
        <position position="189"/>
    </location>
    <ligand>
        <name>D-alanine</name>
        <dbReference type="ChEBI" id="CHEBI:57416"/>
    </ligand>
</feature>
<feature type="binding site" evidence="1">
    <location>
        <begin position="284"/>
        <end position="289"/>
    </location>
    <ligand>
        <name>ATP</name>
        <dbReference type="ChEBI" id="CHEBI:30616"/>
    </ligand>
</feature>
<feature type="binding site" evidence="1">
    <location>
        <position position="293"/>
    </location>
    <ligand>
        <name>D-alanine</name>
        <dbReference type="ChEBI" id="CHEBI:57416"/>
    </ligand>
</feature>
<feature type="binding site" evidence="1">
    <location>
        <position position="365"/>
    </location>
    <ligand>
        <name>ATP</name>
        <dbReference type="ChEBI" id="CHEBI:30616"/>
    </ligand>
</feature>
<feature type="binding site" evidence="1">
    <location>
        <position position="473"/>
    </location>
    <ligand>
        <name>ATP</name>
        <dbReference type="ChEBI" id="CHEBI:30616"/>
    </ligand>
</feature>
<feature type="binding site" evidence="1">
    <location>
        <position position="473"/>
    </location>
    <ligand>
        <name>D-alanine</name>
        <dbReference type="ChEBI" id="CHEBI:57416"/>
    </ligand>
</feature>